<gene>
    <name evidence="1" type="primary">thiC</name>
    <name type="ordered locus">MT0437</name>
</gene>
<comment type="function">
    <text evidence="1">Catalyzes the synthesis of the hydroxymethylpyrimidine phosphate (HMP-P) moiety of thiamine from aminoimidazole ribotide (AIR) in a radical S-adenosyl-L-methionine (SAM)-dependent reaction.</text>
</comment>
<comment type="catalytic activity">
    <reaction evidence="1">
        <text>5-amino-1-(5-phospho-beta-D-ribosyl)imidazole + S-adenosyl-L-methionine = 4-amino-2-methyl-5-(phosphooxymethyl)pyrimidine + CO + 5'-deoxyadenosine + formate + L-methionine + 3 H(+)</text>
        <dbReference type="Rhea" id="RHEA:24840"/>
        <dbReference type="ChEBI" id="CHEBI:15378"/>
        <dbReference type="ChEBI" id="CHEBI:15740"/>
        <dbReference type="ChEBI" id="CHEBI:17245"/>
        <dbReference type="ChEBI" id="CHEBI:17319"/>
        <dbReference type="ChEBI" id="CHEBI:57844"/>
        <dbReference type="ChEBI" id="CHEBI:58354"/>
        <dbReference type="ChEBI" id="CHEBI:59789"/>
        <dbReference type="ChEBI" id="CHEBI:137981"/>
        <dbReference type="EC" id="4.1.99.17"/>
    </reaction>
</comment>
<comment type="cofactor">
    <cofactor evidence="1">
        <name>[4Fe-4S] cluster</name>
        <dbReference type="ChEBI" id="CHEBI:49883"/>
    </cofactor>
    <text evidence="1">Binds 1 [4Fe-4S] cluster per subunit. The cluster is coordinated with 3 cysteines and an exchangeable S-adenosyl-L-methionine.</text>
</comment>
<comment type="pathway">
    <text evidence="1">Cofactor biosynthesis; thiamine diphosphate biosynthesis.</text>
</comment>
<comment type="similarity">
    <text evidence="1">Belongs to the ThiC family.</text>
</comment>
<comment type="sequence caution" evidence="2">
    <conflict type="erroneous initiation">
        <sequence resource="EMBL-CDS" id="AAK44661"/>
    </conflict>
</comment>
<protein>
    <recommendedName>
        <fullName evidence="1">Phosphomethylpyrimidine synthase</fullName>
        <ecNumber evidence="1">4.1.99.17</ecNumber>
    </recommendedName>
    <alternativeName>
        <fullName evidence="1">Hydroxymethylpyrimidine phosphate synthase</fullName>
        <shortName evidence="1">HMP-P synthase</shortName>
        <shortName evidence="1">HMP-phosphate synthase</shortName>
        <shortName evidence="1">HMPP synthase</shortName>
    </alternativeName>
    <alternativeName>
        <fullName evidence="1">Thiamine biosynthesis protein ThiC</fullName>
    </alternativeName>
</protein>
<keyword id="KW-0004">4Fe-4S</keyword>
<keyword id="KW-0408">Iron</keyword>
<keyword id="KW-0411">Iron-sulfur</keyword>
<keyword id="KW-0456">Lyase</keyword>
<keyword id="KW-0479">Metal-binding</keyword>
<keyword id="KW-1185">Reference proteome</keyword>
<keyword id="KW-0949">S-adenosyl-L-methionine</keyword>
<keyword id="KW-0784">Thiamine biosynthesis</keyword>
<keyword id="KW-0862">Zinc</keyword>
<feature type="chain" id="PRO_0000428409" description="Phosphomethylpyrimidine synthase">
    <location>
        <begin position="1"/>
        <end position="547"/>
    </location>
</feature>
<feature type="binding site" evidence="1">
    <location>
        <position position="146"/>
    </location>
    <ligand>
        <name>substrate</name>
    </ligand>
</feature>
<feature type="binding site" evidence="1">
    <location>
        <position position="175"/>
    </location>
    <ligand>
        <name>substrate</name>
    </ligand>
</feature>
<feature type="binding site" evidence="1">
    <location>
        <position position="204"/>
    </location>
    <ligand>
        <name>substrate</name>
    </ligand>
</feature>
<feature type="binding site" evidence="1">
    <location>
        <position position="240"/>
    </location>
    <ligand>
        <name>substrate</name>
    </ligand>
</feature>
<feature type="binding site" evidence="1">
    <location>
        <begin position="260"/>
        <end position="262"/>
    </location>
    <ligand>
        <name>substrate</name>
    </ligand>
</feature>
<feature type="binding site" evidence="1">
    <location>
        <begin position="301"/>
        <end position="304"/>
    </location>
    <ligand>
        <name>substrate</name>
    </ligand>
</feature>
<feature type="binding site" evidence="1">
    <location>
        <position position="340"/>
    </location>
    <ligand>
        <name>substrate</name>
    </ligand>
</feature>
<feature type="binding site" evidence="1">
    <location>
        <position position="344"/>
    </location>
    <ligand>
        <name>Zn(2+)</name>
        <dbReference type="ChEBI" id="CHEBI:29105"/>
    </ligand>
</feature>
<feature type="binding site" evidence="1">
    <location>
        <position position="367"/>
    </location>
    <ligand>
        <name>substrate</name>
    </ligand>
</feature>
<feature type="binding site" evidence="1">
    <location>
        <position position="408"/>
    </location>
    <ligand>
        <name>Zn(2+)</name>
        <dbReference type="ChEBI" id="CHEBI:29105"/>
    </ligand>
</feature>
<feature type="binding site" evidence="1">
    <location>
        <position position="488"/>
    </location>
    <ligand>
        <name>[4Fe-4S] cluster</name>
        <dbReference type="ChEBI" id="CHEBI:49883"/>
        <note>4Fe-4S-S-AdoMet</note>
    </ligand>
</feature>
<feature type="binding site" evidence="1">
    <location>
        <position position="491"/>
    </location>
    <ligand>
        <name>[4Fe-4S] cluster</name>
        <dbReference type="ChEBI" id="CHEBI:49883"/>
        <note>4Fe-4S-S-AdoMet</note>
    </ligand>
</feature>
<feature type="binding site" evidence="1">
    <location>
        <position position="496"/>
    </location>
    <ligand>
        <name>[4Fe-4S] cluster</name>
        <dbReference type="ChEBI" id="CHEBI:49883"/>
        <note>4Fe-4S-S-AdoMet</note>
    </ligand>
</feature>
<reference key="1">
    <citation type="journal article" date="2002" name="J. Bacteriol.">
        <title>Whole-genome comparison of Mycobacterium tuberculosis clinical and laboratory strains.</title>
        <authorList>
            <person name="Fleischmann R.D."/>
            <person name="Alland D."/>
            <person name="Eisen J.A."/>
            <person name="Carpenter L."/>
            <person name="White O."/>
            <person name="Peterson J.D."/>
            <person name="DeBoy R.T."/>
            <person name="Dodson R.J."/>
            <person name="Gwinn M.L."/>
            <person name="Haft D.H."/>
            <person name="Hickey E.K."/>
            <person name="Kolonay J.F."/>
            <person name="Nelson W.C."/>
            <person name="Umayam L.A."/>
            <person name="Ermolaeva M.D."/>
            <person name="Salzberg S.L."/>
            <person name="Delcher A."/>
            <person name="Utterback T.R."/>
            <person name="Weidman J.F."/>
            <person name="Khouri H.M."/>
            <person name="Gill J."/>
            <person name="Mikula A."/>
            <person name="Bishai W."/>
            <person name="Jacobs W.R. Jr."/>
            <person name="Venter J.C."/>
            <person name="Fraser C.M."/>
        </authorList>
    </citation>
    <scope>NUCLEOTIDE SEQUENCE [LARGE SCALE GENOMIC DNA]</scope>
    <source>
        <strain>CDC 1551 / Oshkosh</strain>
    </source>
</reference>
<organism>
    <name type="scientific">Mycobacterium tuberculosis (strain CDC 1551 / Oshkosh)</name>
    <dbReference type="NCBI Taxonomy" id="83331"/>
    <lineage>
        <taxon>Bacteria</taxon>
        <taxon>Bacillati</taxon>
        <taxon>Actinomycetota</taxon>
        <taxon>Actinomycetes</taxon>
        <taxon>Mycobacteriales</taxon>
        <taxon>Mycobacteriaceae</taxon>
        <taxon>Mycobacterium</taxon>
        <taxon>Mycobacterium tuberculosis complex</taxon>
    </lineage>
</organism>
<accession>P9WG78</accession>
<accession>L0T5B7</accession>
<accession>P66911</accession>
<accession>P96269</accession>
<dbReference type="EC" id="4.1.99.17" evidence="1"/>
<dbReference type="EMBL" id="AE000516">
    <property type="protein sequence ID" value="AAK44661.1"/>
    <property type="status" value="ALT_INIT"/>
    <property type="molecule type" value="Genomic_DNA"/>
</dbReference>
<dbReference type="PIR" id="E70630">
    <property type="entry name" value="E70630"/>
</dbReference>
<dbReference type="RefSeq" id="WP_003900143.1">
    <property type="nucleotide sequence ID" value="NZ_KK341227.1"/>
</dbReference>
<dbReference type="SMR" id="P9WG78"/>
<dbReference type="KEGG" id="mtc:MT0437"/>
<dbReference type="PATRIC" id="fig|83331.31.peg.466"/>
<dbReference type="HOGENOM" id="CLU_013181_2_1_11"/>
<dbReference type="UniPathway" id="UPA00060"/>
<dbReference type="Proteomes" id="UP000001020">
    <property type="component" value="Chromosome"/>
</dbReference>
<dbReference type="GO" id="GO:0005829">
    <property type="term" value="C:cytosol"/>
    <property type="evidence" value="ECO:0007669"/>
    <property type="project" value="TreeGrafter"/>
</dbReference>
<dbReference type="GO" id="GO:0051539">
    <property type="term" value="F:4 iron, 4 sulfur cluster binding"/>
    <property type="evidence" value="ECO:0007669"/>
    <property type="project" value="UniProtKB-KW"/>
</dbReference>
<dbReference type="GO" id="GO:0016830">
    <property type="term" value="F:carbon-carbon lyase activity"/>
    <property type="evidence" value="ECO:0007669"/>
    <property type="project" value="InterPro"/>
</dbReference>
<dbReference type="GO" id="GO:0008270">
    <property type="term" value="F:zinc ion binding"/>
    <property type="evidence" value="ECO:0007669"/>
    <property type="project" value="UniProtKB-UniRule"/>
</dbReference>
<dbReference type="GO" id="GO:0009228">
    <property type="term" value="P:thiamine biosynthetic process"/>
    <property type="evidence" value="ECO:0007669"/>
    <property type="project" value="UniProtKB-KW"/>
</dbReference>
<dbReference type="GO" id="GO:0009229">
    <property type="term" value="P:thiamine diphosphate biosynthetic process"/>
    <property type="evidence" value="ECO:0007669"/>
    <property type="project" value="UniProtKB-UniRule"/>
</dbReference>
<dbReference type="FunFam" id="3.20.20.540:FF:000001">
    <property type="entry name" value="Phosphomethylpyrimidine synthase"/>
    <property type="match status" value="1"/>
</dbReference>
<dbReference type="Gene3D" id="6.10.250.620">
    <property type="match status" value="1"/>
</dbReference>
<dbReference type="Gene3D" id="3.20.20.540">
    <property type="entry name" value="Radical SAM ThiC family, central domain"/>
    <property type="match status" value="1"/>
</dbReference>
<dbReference type="HAMAP" id="MF_00089">
    <property type="entry name" value="ThiC"/>
    <property type="match status" value="1"/>
</dbReference>
<dbReference type="InterPro" id="IPR037509">
    <property type="entry name" value="ThiC"/>
</dbReference>
<dbReference type="InterPro" id="IPR025747">
    <property type="entry name" value="ThiC-associated_dom"/>
</dbReference>
<dbReference type="InterPro" id="IPR038521">
    <property type="entry name" value="ThiC/Bza_core_dom"/>
</dbReference>
<dbReference type="InterPro" id="IPR002817">
    <property type="entry name" value="ThiC/BzaA/B"/>
</dbReference>
<dbReference type="NCBIfam" id="NF006763">
    <property type="entry name" value="PRK09284.1"/>
    <property type="match status" value="1"/>
</dbReference>
<dbReference type="NCBIfam" id="NF009895">
    <property type="entry name" value="PRK13352.1"/>
    <property type="match status" value="1"/>
</dbReference>
<dbReference type="NCBIfam" id="TIGR00190">
    <property type="entry name" value="thiC"/>
    <property type="match status" value="1"/>
</dbReference>
<dbReference type="PANTHER" id="PTHR30557:SF1">
    <property type="entry name" value="PHOSPHOMETHYLPYRIMIDINE SYNTHASE, CHLOROPLASTIC"/>
    <property type="match status" value="1"/>
</dbReference>
<dbReference type="PANTHER" id="PTHR30557">
    <property type="entry name" value="THIAMINE BIOSYNTHESIS PROTEIN THIC"/>
    <property type="match status" value="1"/>
</dbReference>
<dbReference type="Pfam" id="PF13667">
    <property type="entry name" value="ThiC-associated"/>
    <property type="match status" value="1"/>
</dbReference>
<dbReference type="Pfam" id="PF01964">
    <property type="entry name" value="ThiC_Rad_SAM"/>
    <property type="match status" value="1"/>
</dbReference>
<dbReference type="SFLD" id="SFLDF00407">
    <property type="entry name" value="phosphomethylpyrimidine_syntha"/>
    <property type="match status" value="1"/>
</dbReference>
<dbReference type="SFLD" id="SFLDG01114">
    <property type="entry name" value="phosphomethylpyrimidine_syntha"/>
    <property type="match status" value="1"/>
</dbReference>
<dbReference type="SFLD" id="SFLDS00113">
    <property type="entry name" value="Radical_SAM_Phosphomethylpyrim"/>
    <property type="match status" value="1"/>
</dbReference>
<evidence type="ECO:0000255" key="1">
    <source>
        <dbReference type="HAMAP-Rule" id="MF_00089"/>
    </source>
</evidence>
<evidence type="ECO:0000305" key="2"/>
<sequence>MTITVEPSVTTGPIAGSAKAYREIEAPGSGATLQVPFRRVHLSTGDHFDLYDTSGPYTDTDTVIDLTAGLPHRPGVVRDRGTQLQRARAGEITAEMAFIAAREDMSAELVRDEVARGRAVIPANHHHPESEPMIIGKAFAVKVNANIGNSAVTSSIAEEVDKMVWATRWGADTIMDLSTGKNIHETREWILRNSPVPVGTVPIYQALEKVKGDPTELTWEIYRDTVIEQCEQGVDYMTVHAGVLLRYVPLTAKRVTGIVSRGGSIMAAWCLAHHRESFLYTNFEELCDIFARYDVTFSLGDGLRPGSIADANDAAQFAELRTLGELTKIAKAHGAQVMIEGPGHIPMHKIVENVRLEEELCEEAPFYTLGPLATDIAPAYDHITSAIGAAIIAQAGTAMLCYVTPKEHLGLPDRKDVKDGVIAYKIAAHAADLAKGHPRAQERDDALSTARFEFRWNDQFALSLDPDTAREFHDETLPAEPAKTAHFCSMCGPKFCSMRITQDVREYAAEHGLETEADIEAVLAAGMAEKSREFAEHGNRVYLPITQ</sequence>
<proteinExistence type="inferred from homology"/>
<name>THIC_MYCTO</name>